<gene>
    <name evidence="1" type="primary">matK</name>
</gene>
<organism>
    <name type="scientific">Empetrum nigrum</name>
    <name type="common">Black crowberry</name>
    <dbReference type="NCBI Taxonomy" id="191066"/>
    <lineage>
        <taxon>Eukaryota</taxon>
        <taxon>Viridiplantae</taxon>
        <taxon>Streptophyta</taxon>
        <taxon>Embryophyta</taxon>
        <taxon>Tracheophyta</taxon>
        <taxon>Spermatophyta</taxon>
        <taxon>Magnoliopsida</taxon>
        <taxon>eudicotyledons</taxon>
        <taxon>Gunneridae</taxon>
        <taxon>Pentapetalae</taxon>
        <taxon>asterids</taxon>
        <taxon>Ericales</taxon>
        <taxon>Ericaceae</taxon>
        <taxon>Ericoideae</taxon>
        <taxon>Empetreae</taxon>
        <taxon>Empetrum</taxon>
    </lineage>
</organism>
<accession>Q7HTB8</accession>
<dbReference type="EMBL" id="AF519558">
    <property type="protein sequence ID" value="AAM88330.1"/>
    <property type="molecule type" value="Genomic_DNA"/>
</dbReference>
<dbReference type="GO" id="GO:0009507">
    <property type="term" value="C:chloroplast"/>
    <property type="evidence" value="ECO:0007669"/>
    <property type="project" value="UniProtKB-SubCell"/>
</dbReference>
<dbReference type="GO" id="GO:0003723">
    <property type="term" value="F:RNA binding"/>
    <property type="evidence" value="ECO:0007669"/>
    <property type="project" value="UniProtKB-KW"/>
</dbReference>
<dbReference type="GO" id="GO:0006397">
    <property type="term" value="P:mRNA processing"/>
    <property type="evidence" value="ECO:0007669"/>
    <property type="project" value="UniProtKB-KW"/>
</dbReference>
<dbReference type="GO" id="GO:0008380">
    <property type="term" value="P:RNA splicing"/>
    <property type="evidence" value="ECO:0007669"/>
    <property type="project" value="UniProtKB-UniRule"/>
</dbReference>
<dbReference type="GO" id="GO:0008033">
    <property type="term" value="P:tRNA processing"/>
    <property type="evidence" value="ECO:0007669"/>
    <property type="project" value="UniProtKB-KW"/>
</dbReference>
<dbReference type="HAMAP" id="MF_01390">
    <property type="entry name" value="MatK"/>
    <property type="match status" value="1"/>
</dbReference>
<dbReference type="InterPro" id="IPR024937">
    <property type="entry name" value="Domain_X"/>
</dbReference>
<dbReference type="InterPro" id="IPR002866">
    <property type="entry name" value="Maturase_MatK"/>
</dbReference>
<dbReference type="InterPro" id="IPR024942">
    <property type="entry name" value="Maturase_MatK_N"/>
</dbReference>
<dbReference type="PANTHER" id="PTHR34811">
    <property type="entry name" value="MATURASE K"/>
    <property type="match status" value="1"/>
</dbReference>
<dbReference type="PANTHER" id="PTHR34811:SF1">
    <property type="entry name" value="MATURASE K"/>
    <property type="match status" value="1"/>
</dbReference>
<dbReference type="Pfam" id="PF01348">
    <property type="entry name" value="Intron_maturas2"/>
    <property type="match status" value="1"/>
</dbReference>
<dbReference type="Pfam" id="PF01824">
    <property type="entry name" value="MatK_N"/>
    <property type="match status" value="1"/>
</dbReference>
<feature type="chain" id="PRO_0000143371" description="Maturase K">
    <location>
        <begin position="1"/>
        <end position="506"/>
    </location>
</feature>
<keyword id="KW-0150">Chloroplast</keyword>
<keyword id="KW-0507">mRNA processing</keyword>
<keyword id="KW-0934">Plastid</keyword>
<keyword id="KW-0694">RNA-binding</keyword>
<keyword id="KW-0819">tRNA processing</keyword>
<sequence length="506" mass="60730">MEKFKRSLELERSQQHNFIYPLIFQEYIYALAHDRGLNRSIFLENMGYDNKSSLLIVKRLITYLITQMYQQNHFIFSGNDSNQNKFLGYNTKLYSQMIFEGFAVVVEIPFYLRLLSFLEGKERVKSHNLRSIHSIFPFFEDKFSHLNYVLDILIPHPIHLEILVQTLRYWVKDASSLHLLRFFLHEYPIWNSLITQKKSSFSFSKRNQRFFLFLYNFHVCEYESIFVFLRNQSYHLRSISSETFLERISFYKKIELELFTKDFKAILWVFKEPFLHYVRYRGKALLVSKGTSLLMNKWKYYLVNLWQCYFYMWSQPRRIHINQLANHSLDFLGYLSSVRLKPLMVRSQMIENSFLIENAIKKFDTLMPITPMIESLVKAKFCNVLGHPMSKPVWAALSDSDIIERFGHIYRNLSHYHSGSLKKMSLYRIKYILRLSCARTLARKHKSTIRAFLKRLGVGLLEEFFTEEEQVFYLTFPKASSTSGELYRRRIWYLDIICINDLANYE</sequence>
<comment type="function">
    <text evidence="1">Usually encoded in the trnK tRNA gene intron. Probably assists in splicing its own and other chloroplast group II introns.</text>
</comment>
<comment type="subcellular location">
    <subcellularLocation>
        <location>Plastid</location>
        <location>Chloroplast</location>
    </subcellularLocation>
</comment>
<comment type="similarity">
    <text evidence="1">Belongs to the intron maturase 2 family. MatK subfamily.</text>
</comment>
<evidence type="ECO:0000255" key="1">
    <source>
        <dbReference type="HAMAP-Rule" id="MF_01390"/>
    </source>
</evidence>
<proteinExistence type="inferred from homology"/>
<name>MATK_EMPNI</name>
<reference key="1">
    <citation type="journal article" date="2002" name="Mol. Phylogenet. Evol.">
        <title>Phylogenetic relationships of Empetraceae inferred from sequences of chloroplast gene matK and nuclear ribosomal DNA ITS region.</title>
        <authorList>
            <person name="Li J."/>
            <person name="Alexander J. III"/>
            <person name="Ward T."/>
            <person name="Del Tredici P."/>
            <person name="Nicholson R."/>
        </authorList>
    </citation>
    <scope>NUCLEOTIDE SEQUENCE [GENOMIC DNA]</scope>
</reference>
<geneLocation type="chloroplast"/>
<protein>
    <recommendedName>
        <fullName evidence="1">Maturase K</fullName>
    </recommendedName>
    <alternativeName>
        <fullName evidence="1">Intron maturase</fullName>
    </alternativeName>
</protein>